<proteinExistence type="inferred from homology"/>
<accession>B1XGB0</accession>
<name>ALLB_ECODH</name>
<reference key="1">
    <citation type="journal article" date="2008" name="J. Bacteriol.">
        <title>The complete genome sequence of Escherichia coli DH10B: insights into the biology of a laboratory workhorse.</title>
        <authorList>
            <person name="Durfee T."/>
            <person name="Nelson R."/>
            <person name="Baldwin S."/>
            <person name="Plunkett G. III"/>
            <person name="Burland V."/>
            <person name="Mau B."/>
            <person name="Petrosino J.F."/>
            <person name="Qin X."/>
            <person name="Muzny D.M."/>
            <person name="Ayele M."/>
            <person name="Gibbs R.A."/>
            <person name="Csorgo B."/>
            <person name="Posfai G."/>
            <person name="Weinstock G.M."/>
            <person name="Blattner F.R."/>
        </authorList>
    </citation>
    <scope>NUCLEOTIDE SEQUENCE [LARGE SCALE GENOMIC DNA]</scope>
    <source>
        <strain>K12 / DH10B</strain>
    </source>
</reference>
<organism>
    <name type="scientific">Escherichia coli (strain K12 / DH10B)</name>
    <dbReference type="NCBI Taxonomy" id="316385"/>
    <lineage>
        <taxon>Bacteria</taxon>
        <taxon>Pseudomonadati</taxon>
        <taxon>Pseudomonadota</taxon>
        <taxon>Gammaproteobacteria</taxon>
        <taxon>Enterobacterales</taxon>
        <taxon>Enterobacteriaceae</taxon>
        <taxon>Escherichia</taxon>
    </lineage>
</organism>
<keyword id="KW-0378">Hydrolase</keyword>
<keyword id="KW-0479">Metal-binding</keyword>
<keyword id="KW-0659">Purine metabolism</keyword>
<keyword id="KW-0862">Zinc</keyword>
<sequence length="453" mass="49602">MSFDLIIKNGTVILENEARVVDIAVKGGKIAAIGQDLGDAKEVMDASGLVVSPGMVDAHTHISEPGRSHWEGYETGTRAAAKGGITTMIEMPLNQLPATVDRASIELKFDAAKGKLTIDAAQLGGLVSYNIDRLHELDEVGVVGFKCFVATCGDRGIDNDFRDVNDWQFFKGAQKLGELGQPVLVHCENALICDELGEEAKREGRVTAHDYVASRPVFTEVEAIRRVLYLAKVAGCRLHVCHVSSPEGVEEVTRARQEGQDVTCESCPHYFVLDTDQFEEIGTLAKCSPPIRDLENQKGMWEKLFNGEIDCLVSDHSPCPPEMKAGNIMKAWGGIAGLQSCMDVMFDEAVQKRGMSLPMFGKLMATNAADIFGLQQKGRIAPGKDADFVFIQPNSSYVLTNDDLEYRHKVSPYVGRTIGARITKTILRGDVIYDIEQGFPVAPKGQFILKHQQ</sequence>
<gene>
    <name evidence="1" type="primary">allB</name>
    <name type="ordered locus">ECDH10B_0468</name>
</gene>
<evidence type="ECO:0000255" key="1">
    <source>
        <dbReference type="HAMAP-Rule" id="MF_01645"/>
    </source>
</evidence>
<dbReference type="EC" id="3.5.2.5" evidence="1"/>
<dbReference type="EMBL" id="CP000948">
    <property type="protein sequence ID" value="ACB01637.1"/>
    <property type="molecule type" value="Genomic_DNA"/>
</dbReference>
<dbReference type="RefSeq" id="WP_000006900.1">
    <property type="nucleotide sequence ID" value="NC_010473.1"/>
</dbReference>
<dbReference type="SMR" id="B1XGB0"/>
<dbReference type="KEGG" id="ecd:ECDH10B_0468"/>
<dbReference type="HOGENOM" id="CLU_015572_4_2_6"/>
<dbReference type="UniPathway" id="UPA00395">
    <property type="reaction ID" value="UER00653"/>
</dbReference>
<dbReference type="GO" id="GO:0005737">
    <property type="term" value="C:cytoplasm"/>
    <property type="evidence" value="ECO:0007669"/>
    <property type="project" value="TreeGrafter"/>
</dbReference>
<dbReference type="GO" id="GO:0004038">
    <property type="term" value="F:allantoinase activity"/>
    <property type="evidence" value="ECO:0007669"/>
    <property type="project" value="UniProtKB-UniRule"/>
</dbReference>
<dbReference type="GO" id="GO:0050897">
    <property type="term" value="F:cobalt ion binding"/>
    <property type="evidence" value="ECO:0007669"/>
    <property type="project" value="InterPro"/>
</dbReference>
<dbReference type="GO" id="GO:0008270">
    <property type="term" value="F:zinc ion binding"/>
    <property type="evidence" value="ECO:0007669"/>
    <property type="project" value="InterPro"/>
</dbReference>
<dbReference type="GO" id="GO:0000256">
    <property type="term" value="P:allantoin catabolic process"/>
    <property type="evidence" value="ECO:0007669"/>
    <property type="project" value="UniProtKB-UniRule"/>
</dbReference>
<dbReference type="GO" id="GO:0006145">
    <property type="term" value="P:purine nucleobase catabolic process"/>
    <property type="evidence" value="ECO:0007669"/>
    <property type="project" value="TreeGrafter"/>
</dbReference>
<dbReference type="CDD" id="cd01315">
    <property type="entry name" value="L-HYD_ALN"/>
    <property type="match status" value="1"/>
</dbReference>
<dbReference type="FunFam" id="3.20.20.140:FF:000013">
    <property type="entry name" value="Allantoinase"/>
    <property type="match status" value="1"/>
</dbReference>
<dbReference type="Gene3D" id="3.20.20.140">
    <property type="entry name" value="Metal-dependent hydrolases"/>
    <property type="match status" value="1"/>
</dbReference>
<dbReference type="Gene3D" id="2.30.40.10">
    <property type="entry name" value="Urease, subunit C, domain 1"/>
    <property type="match status" value="1"/>
</dbReference>
<dbReference type="HAMAP" id="MF_01645">
    <property type="entry name" value="Hydantoinase"/>
    <property type="match status" value="1"/>
</dbReference>
<dbReference type="InterPro" id="IPR017593">
    <property type="entry name" value="Allantoinase"/>
</dbReference>
<dbReference type="InterPro" id="IPR047604">
    <property type="entry name" value="Allantoinase_bact"/>
</dbReference>
<dbReference type="InterPro" id="IPR006680">
    <property type="entry name" value="Amidohydro-rel"/>
</dbReference>
<dbReference type="InterPro" id="IPR050138">
    <property type="entry name" value="DHOase/Allantoinase_Hydrolase"/>
</dbReference>
<dbReference type="InterPro" id="IPR011059">
    <property type="entry name" value="Metal-dep_hydrolase_composite"/>
</dbReference>
<dbReference type="InterPro" id="IPR032466">
    <property type="entry name" value="Metal_Hydrolase"/>
</dbReference>
<dbReference type="NCBIfam" id="TIGR03178">
    <property type="entry name" value="allantoinase"/>
    <property type="match status" value="1"/>
</dbReference>
<dbReference type="NCBIfam" id="NF005960">
    <property type="entry name" value="PRK08044.1"/>
    <property type="match status" value="1"/>
</dbReference>
<dbReference type="PANTHER" id="PTHR43668">
    <property type="entry name" value="ALLANTOINASE"/>
    <property type="match status" value="1"/>
</dbReference>
<dbReference type="PANTHER" id="PTHR43668:SF4">
    <property type="entry name" value="ALLANTOINASE"/>
    <property type="match status" value="1"/>
</dbReference>
<dbReference type="Pfam" id="PF01979">
    <property type="entry name" value="Amidohydro_1"/>
    <property type="match status" value="1"/>
</dbReference>
<dbReference type="SUPFAM" id="SSF51338">
    <property type="entry name" value="Composite domain of metallo-dependent hydrolases"/>
    <property type="match status" value="1"/>
</dbReference>
<dbReference type="SUPFAM" id="SSF51556">
    <property type="entry name" value="Metallo-dependent hydrolases"/>
    <property type="match status" value="1"/>
</dbReference>
<protein>
    <recommendedName>
        <fullName evidence="1">Allantoinase</fullName>
        <ecNumber evidence="1">3.5.2.5</ecNumber>
    </recommendedName>
    <alternativeName>
        <fullName evidence="1">Allantoin-utilizing enzyme</fullName>
    </alternativeName>
</protein>
<feature type="chain" id="PRO_1000186922" description="Allantoinase">
    <location>
        <begin position="1"/>
        <end position="453"/>
    </location>
</feature>
<feature type="binding site" evidence="1">
    <location>
        <position position="59"/>
    </location>
    <ligand>
        <name>Zn(2+)</name>
        <dbReference type="ChEBI" id="CHEBI:29105"/>
        <label>1</label>
    </ligand>
</feature>
<feature type="binding site" evidence="1">
    <location>
        <position position="61"/>
    </location>
    <ligand>
        <name>Zn(2+)</name>
        <dbReference type="ChEBI" id="CHEBI:29105"/>
        <label>1</label>
    </ligand>
</feature>
<feature type="binding site" description="via carbamate group" evidence="1">
    <location>
        <position position="146"/>
    </location>
    <ligand>
        <name>Zn(2+)</name>
        <dbReference type="ChEBI" id="CHEBI:29105"/>
        <label>1</label>
    </ligand>
</feature>
<feature type="binding site" description="via carbamate group" evidence="1">
    <location>
        <position position="146"/>
    </location>
    <ligand>
        <name>Zn(2+)</name>
        <dbReference type="ChEBI" id="CHEBI:29105"/>
        <label>2</label>
    </ligand>
</feature>
<feature type="binding site" evidence="1">
    <location>
        <position position="186"/>
    </location>
    <ligand>
        <name>Zn(2+)</name>
        <dbReference type="ChEBI" id="CHEBI:29105"/>
        <label>2</label>
    </ligand>
</feature>
<feature type="binding site" evidence="1">
    <location>
        <position position="242"/>
    </location>
    <ligand>
        <name>Zn(2+)</name>
        <dbReference type="ChEBI" id="CHEBI:29105"/>
        <label>2</label>
    </ligand>
</feature>
<feature type="binding site" evidence="1">
    <location>
        <position position="315"/>
    </location>
    <ligand>
        <name>Zn(2+)</name>
        <dbReference type="ChEBI" id="CHEBI:29105"/>
        <label>1</label>
    </ligand>
</feature>
<feature type="modified residue" description="N6-carboxylysine" evidence="1">
    <location>
        <position position="146"/>
    </location>
</feature>
<comment type="function">
    <text evidence="1">Catalyzes the conversion of allantoin (5-ureidohydantoin) to allantoic acid by hydrolytic cleavage of the five-member hydantoin ring.</text>
</comment>
<comment type="catalytic activity">
    <reaction evidence="1">
        <text>(S)-allantoin + H2O = allantoate + H(+)</text>
        <dbReference type="Rhea" id="RHEA:17029"/>
        <dbReference type="ChEBI" id="CHEBI:15377"/>
        <dbReference type="ChEBI" id="CHEBI:15378"/>
        <dbReference type="ChEBI" id="CHEBI:15678"/>
        <dbReference type="ChEBI" id="CHEBI:17536"/>
        <dbReference type="EC" id="3.5.2.5"/>
    </reaction>
</comment>
<comment type="cofactor">
    <cofactor evidence="1">
        <name>Zn(2+)</name>
        <dbReference type="ChEBI" id="CHEBI:29105"/>
    </cofactor>
    <text evidence="1">Binds 2 Zn(2+) ions per subunit.</text>
</comment>
<comment type="pathway">
    <text evidence="1">Nitrogen metabolism; (S)-allantoin degradation; allantoate from (S)-allantoin: step 1/1.</text>
</comment>
<comment type="subunit">
    <text evidence="1">Homotetramer.</text>
</comment>
<comment type="PTM">
    <text evidence="1">Carboxylation allows a single lysine to coordinate two zinc ions.</text>
</comment>
<comment type="similarity">
    <text evidence="1">Belongs to the metallo-dependent hydrolases superfamily. Allantoinase family.</text>
</comment>